<gene>
    <name evidence="24" type="primary">MDK</name>
    <name type="synonym">MK1</name>
    <name type="synonym">NEGF2</name>
</gene>
<proteinExistence type="evidence at protein level"/>
<name>MK_HUMAN</name>
<feature type="signal peptide" evidence="10 15 18">
    <location>
        <begin position="1"/>
        <end position="20"/>
    </location>
</feature>
<feature type="chain" id="PRO_0000024662" description="Midkine">
    <location>
        <begin position="21"/>
        <end position="143"/>
    </location>
</feature>
<feature type="site" description="Required for high affinity binding to PTRZ1 by interacting with the chondroitin sulfate chains of PTRZ1" evidence="1">
    <location>
        <position position="103"/>
    </location>
</feature>
<feature type="disulfide bond">
    <location>
        <begin position="37"/>
        <end position="61"/>
    </location>
</feature>
<feature type="disulfide bond">
    <location>
        <begin position="45"/>
        <end position="70"/>
    </location>
</feature>
<feature type="disulfide bond">
    <location>
        <begin position="52"/>
        <end position="74"/>
    </location>
</feature>
<feature type="disulfide bond">
    <location>
        <begin position="84"/>
        <end position="116"/>
    </location>
</feature>
<feature type="disulfide bond">
    <location>
        <begin position="94"/>
        <end position="126"/>
    </location>
</feature>
<feature type="splice variant" id="VSP_047452" description="In isoform 2." evidence="19">
    <location>
        <begin position="26"/>
        <end position="81"/>
    </location>
</feature>
<feature type="sequence variant" id="VAR_006353" description="In 35% of the chains.">
    <location>
        <begin position="21"/>
        <end position="22"/>
    </location>
</feature>
<feature type="strand" evidence="26">
    <location>
        <begin position="29"/>
        <end position="31"/>
    </location>
</feature>
<feature type="strand" evidence="26">
    <location>
        <begin position="38"/>
        <end position="43"/>
    </location>
</feature>
<feature type="strand" evidence="26">
    <location>
        <begin position="48"/>
        <end position="54"/>
    </location>
</feature>
<feature type="strand" evidence="26">
    <location>
        <begin position="57"/>
        <end position="63"/>
    </location>
</feature>
<feature type="strand" evidence="26">
    <location>
        <begin position="66"/>
        <end position="68"/>
    </location>
</feature>
<feature type="strand" evidence="26">
    <location>
        <begin position="76"/>
        <end position="79"/>
    </location>
</feature>
<feature type="strand" evidence="25">
    <location>
        <begin position="96"/>
        <end position="100"/>
    </location>
</feature>
<feature type="strand" evidence="25">
    <location>
        <begin position="111"/>
        <end position="115"/>
    </location>
</feature>
<feature type="strand" evidence="25">
    <location>
        <begin position="118"/>
        <end position="120"/>
    </location>
</feature>
<evidence type="ECO:0000250" key="1">
    <source>
        <dbReference type="UniProtKB" id="P12025"/>
    </source>
</evidence>
<evidence type="ECO:0000250" key="2">
    <source>
        <dbReference type="UniProtKB" id="Q9R1S9"/>
    </source>
</evidence>
<evidence type="ECO:0000269" key="3">
    <source>
    </source>
</evidence>
<evidence type="ECO:0000269" key="4">
    <source>
    </source>
</evidence>
<evidence type="ECO:0000269" key="5">
    <source>
    </source>
</evidence>
<evidence type="ECO:0000269" key="6">
    <source>
    </source>
</evidence>
<evidence type="ECO:0000269" key="7">
    <source>
    </source>
</evidence>
<evidence type="ECO:0000269" key="8">
    <source>
    </source>
</evidence>
<evidence type="ECO:0000269" key="9">
    <source>
    </source>
</evidence>
<evidence type="ECO:0000269" key="10">
    <source>
    </source>
</evidence>
<evidence type="ECO:0000269" key="11">
    <source>
    </source>
</evidence>
<evidence type="ECO:0000269" key="12">
    <source>
    </source>
</evidence>
<evidence type="ECO:0000269" key="13">
    <source>
    </source>
</evidence>
<evidence type="ECO:0000269" key="14">
    <source>
    </source>
</evidence>
<evidence type="ECO:0000269" key="15">
    <source>
    </source>
</evidence>
<evidence type="ECO:0000269" key="16">
    <source>
    </source>
</evidence>
<evidence type="ECO:0000269" key="17">
    <source>
    </source>
</evidence>
<evidence type="ECO:0000269" key="18">
    <source>
    </source>
</evidence>
<evidence type="ECO:0000303" key="19">
    <source>
    </source>
</evidence>
<evidence type="ECO:0000303" key="20">
    <source>
    </source>
</evidence>
<evidence type="ECO:0000303" key="21">
    <source>
    </source>
</evidence>
<evidence type="ECO:0000303" key="22">
    <source>
    </source>
</evidence>
<evidence type="ECO:0000305" key="23"/>
<evidence type="ECO:0000312" key="24">
    <source>
        <dbReference type="HGNC" id="HGNC:6972"/>
    </source>
</evidence>
<evidence type="ECO:0007829" key="25">
    <source>
        <dbReference type="PDB" id="1MKC"/>
    </source>
</evidence>
<evidence type="ECO:0007829" key="26">
    <source>
        <dbReference type="PDB" id="1MKN"/>
    </source>
</evidence>
<reference key="1">
    <citation type="journal article" date="1991" name="Biochem. Biophys. Res. Commun.">
        <title>A new family of heparin-binding factors: strong conservation of midkine (MK) sequences between the human and the mouse.</title>
        <authorList>
            <person name="Tsutsui J."/>
            <person name="Uehara K."/>
            <person name="Kadomatsu K."/>
            <person name="Matsubara S."/>
            <person name="Muramatsu T."/>
        </authorList>
    </citation>
    <scope>NUCLEOTIDE SEQUENCE [MRNA] (ISOFORM 1)</scope>
    <source>
        <tissue>Kidney</tissue>
    </source>
</reference>
<reference key="2">
    <citation type="journal article" date="1991" name="Growth Factors">
        <title>Cloning, characterization and developmental regulation of two members of a novel human gene family of neurite outgrowth-promoting proteins.</title>
        <authorList>
            <person name="Kretschmer P.J."/>
            <person name="Fairhurst J.L."/>
            <person name="Decker M.M."/>
            <person name="Chan C.P."/>
            <person name="Gluzman Y."/>
            <person name="Boehlen P."/>
            <person name="Kovesdi I."/>
        </authorList>
    </citation>
    <scope>NUCLEOTIDE SEQUENCE [MRNA] (ISOFORM 1)</scope>
    <scope>FUNCTION</scope>
    <scope>INDUCTION</scope>
    <source>
        <tissue>Fetal brain</tissue>
    </source>
</reference>
<reference key="3">
    <citation type="journal article" date="1992" name="J. Biochem.">
        <title>Genomic structure of human midkine (MK), a retinoic acid-responsive growth/differentiation factor.</title>
        <authorList>
            <person name="Uehara K."/>
            <person name="Matsubara S."/>
            <person name="Kadomatsu K."/>
            <person name="Tsutsui J."/>
            <person name="Muramatsu T."/>
        </authorList>
    </citation>
    <scope>NUCLEOTIDE SEQUENCE [GENOMIC DNA]</scope>
</reference>
<reference key="4">
    <citation type="journal article" date="1993" name="DNA Cell Biol.">
        <title>Structure of the gene coding for the human retinoic acid-inducible factor, MK.</title>
        <authorList>
            <person name="Fairhurst J.L."/>
            <person name="Kretschmer P.J."/>
            <person name="Gluzman Y."/>
            <person name="Boehlen P."/>
            <person name="Kovesdi I."/>
        </authorList>
    </citation>
    <scope>NUCLEOTIDE SEQUENCE [GENOMIC DNA]</scope>
    <source>
        <tissue>Fetal brain</tissue>
    </source>
</reference>
<reference key="5">
    <citation type="journal article" date="2007" name="Cancer Lett.">
        <title>Abnormal expression, highly efficient detection and novel truncations of midkine in human tumors, cancers and cell lines.</title>
        <authorList>
            <person name="Tao P."/>
            <person name="Xu D."/>
            <person name="Lin S."/>
            <person name="Ouyang G.L."/>
            <person name="Chang Y."/>
            <person name="Chen Q."/>
            <person name="Yuan Y."/>
            <person name="Zhuo X."/>
            <person name="Luo Q."/>
            <person name="Li J."/>
            <person name="Li B."/>
            <person name="Ruan L."/>
            <person name="Li Q."/>
            <person name="Li Z."/>
        </authorList>
    </citation>
    <scope>NUCLEOTIDE SEQUENCE [MRNA] (ISOFORM 2)</scope>
    <scope>TISSUE SPECIFICITY</scope>
</reference>
<reference key="6">
    <citation type="journal article" date="2006" name="Nature">
        <title>Human chromosome 11 DNA sequence and analysis including novel gene identification.</title>
        <authorList>
            <person name="Taylor T.D."/>
            <person name="Noguchi H."/>
            <person name="Totoki Y."/>
            <person name="Toyoda A."/>
            <person name="Kuroki Y."/>
            <person name="Dewar K."/>
            <person name="Lloyd C."/>
            <person name="Itoh T."/>
            <person name="Takeda T."/>
            <person name="Kim D.-W."/>
            <person name="She X."/>
            <person name="Barlow K.F."/>
            <person name="Bloom T."/>
            <person name="Bruford E."/>
            <person name="Chang J.L."/>
            <person name="Cuomo C.A."/>
            <person name="Eichler E."/>
            <person name="FitzGerald M.G."/>
            <person name="Jaffe D.B."/>
            <person name="LaButti K."/>
            <person name="Nicol R."/>
            <person name="Park H.-S."/>
            <person name="Seaman C."/>
            <person name="Sougnez C."/>
            <person name="Yang X."/>
            <person name="Zimmer A.R."/>
            <person name="Zody M.C."/>
            <person name="Birren B.W."/>
            <person name="Nusbaum C."/>
            <person name="Fujiyama A."/>
            <person name="Hattori M."/>
            <person name="Rogers J."/>
            <person name="Lander E.S."/>
            <person name="Sakaki Y."/>
        </authorList>
    </citation>
    <scope>NUCLEOTIDE SEQUENCE [LARGE SCALE GENOMIC DNA]</scope>
</reference>
<reference key="7">
    <citation type="journal article" date="2004" name="Genome Res.">
        <title>The status, quality, and expansion of the NIH full-length cDNA project: the Mammalian Gene Collection (MGC).</title>
        <authorList>
            <consortium name="The MGC Project Team"/>
        </authorList>
    </citation>
    <scope>NUCLEOTIDE SEQUENCE [LARGE SCALE MRNA] (ISOFORM 1)</scope>
    <source>
        <tissue>Uterus</tissue>
    </source>
</reference>
<reference key="8">
    <citation type="journal article" date="1991" name="Biochem. Biophys. Res. Commun.">
        <title>Amphiregulin-associated protein: complete amino acid sequence of a protein produced by the 12-0-tetradecanoylphorbol-13-acetate-treated human breast adenocarcinoma cell line MCF-7.</title>
        <authorList>
            <person name="Shoyab M."/>
            <person name="McDonald V.L."/>
            <person name="Dick K."/>
            <person name="Modrell B."/>
            <person name="Malik N."/>
            <person name="Plowman G.D."/>
        </authorList>
    </citation>
    <scope>PROTEIN SEQUENCE OF 21-143</scope>
</reference>
<reference key="9">
    <citation type="journal article" date="1993" name="Arterioscler. Thromb.">
        <title>Identification of novel heparin-releasable proteins, as well as the cytokines midkine and pleiotrophin, in human postheparin plasma.</title>
        <authorList>
            <person name="Novotny W.F."/>
            <person name="Maffi T."/>
            <person name="Mehta R.L."/>
            <person name="Milner P.G."/>
        </authorList>
    </citation>
    <scope>PROTEIN SEQUENCE OF 21-35</scope>
    <scope>INDUCTION</scope>
    <source>
        <tissue>Plasma</tissue>
    </source>
</reference>
<reference key="10">
    <citation type="journal article" date="2004" name="Protein Sci.">
        <title>Signal peptide prediction based on analysis of experimentally verified cleavage sites.</title>
        <authorList>
            <person name="Zhang Z."/>
            <person name="Henzel W.J."/>
        </authorList>
    </citation>
    <scope>PROTEIN SEQUENCE OF 21-35</scope>
</reference>
<reference key="11">
    <citation type="journal article" date="1999" name="J. Biol. Chem.">
        <title>A receptor-like protein-tyrosine phosphatase PTPzeta/RPTPbeta binds a heparin-binding growth factor midkine. Involvement of arginine 78 of midkine in the high affinity binding to PTPzeta.</title>
        <authorList>
            <person name="Maeda N."/>
            <person name="Ichihara-Tanaka K."/>
            <person name="Kimura T."/>
            <person name="Kadomatsu K."/>
            <person name="Muramatsu T."/>
            <person name="Noda M."/>
        </authorList>
    </citation>
    <scope>INTERACTION WITH PTPRZ1</scope>
    <scope>FUNCTION</scope>
</reference>
<reference key="12">
    <citation type="journal article" date="2000" name="Biochem. Biophys. Res. Commun.">
        <title>LDL receptor-related protein as a component of the midkine receptor.</title>
        <authorList>
            <person name="Muramatsu H."/>
            <person name="Zou K."/>
            <person name="Sakaguchi N."/>
            <person name="Ikematsu S."/>
            <person name="Sakuma S."/>
            <person name="Muramatsu T."/>
        </authorList>
    </citation>
    <scope>INTERACTION WITH LRP1; NCAM1 AND LRP2</scope>
    <scope>FUNCTION</scope>
</reference>
<reference key="13">
    <citation type="journal article" date="2000" name="J. Clin. Invest.">
        <title>Neointima formation in a restenosis model is suppressed in midkine-deficient mice.</title>
        <authorList>
            <person name="Horiba M."/>
            <person name="Kadomatsu K."/>
            <person name="Nakamura E."/>
            <person name="Muramatsu H."/>
            <person name="Ikematsu S."/>
            <person name="Sakuma S."/>
            <person name="Hayashi K."/>
            <person name="Yuzawa Y."/>
            <person name="Matsuo S."/>
            <person name="Kuzuya M."/>
            <person name="Kaname T."/>
            <person name="Hirai M."/>
            <person name="Saito H."/>
            <person name="Muramatsu T."/>
        </authorList>
    </citation>
    <scope>FUNCTION</scope>
</reference>
<reference key="14">
    <citation type="journal article" date="2001" name="Glycoconj. J.">
        <title>Glypican-2 binds to midkine: the role of glypican-2 in neuronal cell adhesion and neurite outgrowth.</title>
        <authorList>
            <person name="Kurosawa N."/>
            <person name="Chen G.Y."/>
            <person name="Kadomatsu K."/>
            <person name="Ikematsu S."/>
            <person name="Sakuma S."/>
            <person name="Muramatsu T."/>
        </authorList>
    </citation>
    <scope>INTERACTION WITH GPC2 AND SCD3</scope>
    <scope>FUNCTION</scope>
</reference>
<reference key="15">
    <citation type="journal article" date="2002" name="J. Biol. Chem.">
        <title>Midkine binds to anaplastic lymphoma kinase (ALK) and acts as a growth factor for different cell types.</title>
        <authorList>
            <person name="Stoica G.E."/>
            <person name="Kuo A."/>
            <person name="Powers C."/>
            <person name="Bowden E.T."/>
            <person name="Sale E.B."/>
            <person name="Riegel A.T."/>
            <person name="Wellstein A."/>
        </authorList>
    </citation>
    <scope>INTERACTION WITH ALK</scope>
    <scope>FUNCTION</scope>
</reference>
<reference key="16">
    <citation type="journal article" date="2002" name="J. Biol. Chem.">
        <title>The anti-HIV cytokine midkine binds the cell surface-expressed nucleolin as a low affinity receptor.</title>
        <authorList>
            <person name="Said E.A."/>
            <person name="Krust B."/>
            <person name="Nisole S."/>
            <person name="Svab J."/>
            <person name="Briand J.P."/>
            <person name="Hovanessian A.G."/>
        </authorList>
    </citation>
    <scope>INTERACTION WITH NCL</scope>
</reference>
<reference key="17">
    <citation type="journal article" date="2003" name="Neurosci. Res.">
        <title>Receptor-type protein tyrosine phosphatase zeta as a component of the signaling receptor complex for midkine-dependent survival of embryonic neurons.</title>
        <authorList>
            <person name="Sakaguchi N."/>
            <person name="Muramatsu H."/>
            <person name="Ichihara-Tanaka K."/>
            <person name="Maeda N."/>
            <person name="Noda M."/>
            <person name="Yamamoto T."/>
            <person name="Michikawa M."/>
            <person name="Ikematsu S."/>
            <person name="Sakuma S."/>
            <person name="Muramatsu T."/>
        </authorList>
    </citation>
    <scope>INTERACTION WITH LRP6 AND LRP8</scope>
    <scope>FUNCTION</scope>
</reference>
<reference key="18">
    <citation type="journal article" date="2004" name="J. Cell Sci.">
        <title>alpha4beta1- and alpha6beta1-integrins are functional receptors for midkine, a heparin-binding growth factor.</title>
        <authorList>
            <person name="Muramatsu H."/>
            <person name="Zou P."/>
            <person name="Suzuki H."/>
            <person name="Oda Y."/>
            <person name="Chen G.Y."/>
            <person name="Sakaguchi N."/>
            <person name="Sakuma S."/>
            <person name="Maeda N."/>
            <person name="Noda M."/>
            <person name="Takada Y."/>
            <person name="Muramatsu T."/>
        </authorList>
    </citation>
    <scope>INTERACTION WITH ITGB1; ITGA4; ITGA6</scope>
    <scope>FUNCTION</scope>
</reference>
<reference key="19">
    <citation type="journal article" date="2008" name="Cell Cycle">
        <title>Midkine induces epithelial-mesenchymal transition through Notch2/Jak2-Stat3 signaling in human keratinocytes.</title>
        <authorList>
            <person name="Huang Y."/>
            <person name="Hoque M.O."/>
            <person name="Wu F."/>
            <person name="Trink B."/>
            <person name="Sidransky D."/>
            <person name="Ratovitski E.A."/>
        </authorList>
    </citation>
    <scope>FUNCTION</scope>
    <scope>INTERACTION WITH NOTCH2</scope>
</reference>
<reference key="20">
    <citation type="journal article" date="2012" name="J. Immunol.">
        <title>Midkine inhibits inducible regulatory T cell differentiation by suppressing the development of tolerogenic dendritic cells.</title>
        <authorList>
            <person name="Sonobe Y."/>
            <person name="Li H."/>
            <person name="Jin S."/>
            <person name="Kishida S."/>
            <person name="Kadomatsu K."/>
            <person name="Takeuchi H."/>
            <person name="Mizuno T."/>
            <person name="Suzumura A."/>
        </authorList>
    </citation>
    <scope>FUNCTION</scope>
</reference>
<reference key="21">
    <citation type="journal article" date="2014" name="Blood">
        <title>The cytokine midkine supports neutrophil trafficking during acute inflammation by promoting adhesion via beta2 integrins (CD11/CD18).</title>
        <authorList>
            <person name="Weckbach L.T."/>
            <person name="Gola A."/>
            <person name="Winkelmann M."/>
            <person name="Jakob S.M."/>
            <person name="Groesser L."/>
            <person name="Borgolte J."/>
            <person name="Pogoda F."/>
            <person name="Pick R."/>
            <person name="Pruenster M."/>
            <person name="Mueller-Hoecker J."/>
            <person name="Deindl E."/>
            <person name="Sperandio M."/>
            <person name="Walzog B."/>
        </authorList>
    </citation>
    <scope>FUNCTION</scope>
</reference>
<reference key="22">
    <citation type="journal article" date="1997" name="EMBO J.">
        <title>Solution structure of midkine, a new heparin-binding growth factor.</title>
        <authorList>
            <person name="Iwasaki W."/>
            <person name="Nagata K."/>
            <person name="Hatanaka H."/>
            <person name="Inui T."/>
            <person name="Kimura T."/>
            <person name="Muramatsu T."/>
            <person name="Yoshida K."/>
            <person name="Tasumi M."/>
            <person name="Inagaki F."/>
        </authorList>
    </citation>
    <scope>STRUCTURE BY NMR OF 23-81 AND 84-126</scope>
    <scope>HOMODIMERIZATION</scope>
</reference>
<protein>
    <recommendedName>
        <fullName evidence="22">Midkine</fullName>
        <shortName evidence="22">MK</shortName>
    </recommendedName>
    <alternativeName>
        <fullName evidence="21">Amphiregulin-associated protein</fullName>
        <shortName evidence="21">ARAP</shortName>
    </alternativeName>
    <alternativeName>
        <fullName>Midgestation and kidney protein</fullName>
    </alternativeName>
    <alternativeName>
        <fullName>Neurite outgrowth-promoting factor 2</fullName>
    </alternativeName>
    <alternativeName>
        <fullName evidence="20">Neurite outgrowth-promoting protein</fullName>
    </alternativeName>
</protein>
<dbReference type="EMBL" id="M69148">
    <property type="protein sequence ID" value="AAA58478.1"/>
    <property type="molecule type" value="mRNA"/>
</dbReference>
<dbReference type="EMBL" id="X55110">
    <property type="protein sequence ID" value="CAA38908.1"/>
    <property type="molecule type" value="mRNA"/>
</dbReference>
<dbReference type="EMBL" id="D10604">
    <property type="protein sequence ID" value="BAA01457.1"/>
    <property type="molecule type" value="Genomic_DNA"/>
</dbReference>
<dbReference type="EMBL" id="M94250">
    <property type="protein sequence ID" value="AAA59850.1"/>
    <property type="molecule type" value="Genomic_DNA"/>
</dbReference>
<dbReference type="EMBL" id="DQ323888">
    <property type="protein sequence ID" value="ABC55425.1"/>
    <property type="molecule type" value="mRNA"/>
</dbReference>
<dbReference type="EMBL" id="AC116021">
    <property type="status" value="NOT_ANNOTATED_CDS"/>
    <property type="molecule type" value="Genomic_DNA"/>
</dbReference>
<dbReference type="EMBL" id="BC011704">
    <property type="protein sequence ID" value="AAH11704.1"/>
    <property type="molecule type" value="mRNA"/>
</dbReference>
<dbReference type="CCDS" id="CCDS59226.1">
    <molecule id="P21741-2"/>
</dbReference>
<dbReference type="CCDS" id="CCDS7919.1">
    <molecule id="P21741-1"/>
</dbReference>
<dbReference type="PIR" id="JH0385">
    <property type="entry name" value="JH0385"/>
</dbReference>
<dbReference type="RefSeq" id="NP_001012333.1">
    <molecule id="P21741-1"/>
    <property type="nucleotide sequence ID" value="NM_001012333.3"/>
</dbReference>
<dbReference type="RefSeq" id="NP_001012334.1">
    <molecule id="P21741-1"/>
    <property type="nucleotide sequence ID" value="NM_001012334.2"/>
</dbReference>
<dbReference type="RefSeq" id="NP_001257479.1">
    <molecule id="P21741-1"/>
    <property type="nucleotide sequence ID" value="NM_001270550.1"/>
</dbReference>
<dbReference type="RefSeq" id="NP_001257480.1">
    <molecule id="P21741-1"/>
    <property type="nucleotide sequence ID" value="NM_001270551.3"/>
</dbReference>
<dbReference type="RefSeq" id="NP_001257481.1">
    <molecule id="P21741-2"/>
    <property type="nucleotide sequence ID" value="NM_001270552.3"/>
</dbReference>
<dbReference type="RefSeq" id="NP_002382.1">
    <molecule id="P21741-1"/>
    <property type="nucleotide sequence ID" value="NM_002391.6"/>
</dbReference>
<dbReference type="RefSeq" id="XP_011518418.1">
    <property type="nucleotide sequence ID" value="XM_011520116.2"/>
</dbReference>
<dbReference type="RefSeq" id="XP_016873253.1">
    <property type="nucleotide sequence ID" value="XM_017017764.1"/>
</dbReference>
<dbReference type="PDB" id="1MKC">
    <property type="method" value="NMR"/>
    <property type="chains" value="A=84-126"/>
</dbReference>
<dbReference type="PDB" id="1MKN">
    <property type="method" value="NMR"/>
    <property type="chains" value="A=23-81"/>
</dbReference>
<dbReference type="PDBsum" id="1MKC"/>
<dbReference type="PDBsum" id="1MKN"/>
<dbReference type="SMR" id="P21741"/>
<dbReference type="BioGRID" id="110357">
    <property type="interactions" value="82"/>
</dbReference>
<dbReference type="DIP" id="DIP-5789N"/>
<dbReference type="FunCoup" id="P21741">
    <property type="interactions" value="251"/>
</dbReference>
<dbReference type="IntAct" id="P21741">
    <property type="interactions" value="52"/>
</dbReference>
<dbReference type="MINT" id="P21741"/>
<dbReference type="STRING" id="9606.ENSP00000385451"/>
<dbReference type="BindingDB" id="P21741"/>
<dbReference type="ChEMBL" id="CHEMBL1949490"/>
<dbReference type="GlyGen" id="P21741">
    <property type="glycosylation" value="2 sites, 1 O-linked glycan (2 sites)"/>
</dbReference>
<dbReference type="iPTMnet" id="P21741"/>
<dbReference type="PhosphoSitePlus" id="P21741"/>
<dbReference type="BioMuta" id="MDK"/>
<dbReference type="DMDM" id="127116"/>
<dbReference type="jPOST" id="P21741"/>
<dbReference type="MassIVE" id="P21741"/>
<dbReference type="PaxDb" id="9606-ENSP00000385451"/>
<dbReference type="PeptideAtlas" id="P21741"/>
<dbReference type="ProteomicsDB" id="53896">
    <molecule id="P21741-1"/>
</dbReference>
<dbReference type="ProteomicsDB" id="61338"/>
<dbReference type="Pumba" id="P21741"/>
<dbReference type="ABCD" id="P21741">
    <property type="antibodies" value="1 sequenced antibody"/>
</dbReference>
<dbReference type="Antibodypedia" id="4105">
    <property type="antibodies" value="604 antibodies from 38 providers"/>
</dbReference>
<dbReference type="DNASU" id="4192"/>
<dbReference type="YCharOS" id="P21741">
    <property type="antibodies" value="Tested 8 antibodies from 5 manufacturers"/>
</dbReference>
<dbReference type="Ensembl" id="ENST00000359803.7">
    <molecule id="P21741-1"/>
    <property type="protein sequence ID" value="ENSP00000352852.2"/>
    <property type="gene ID" value="ENSG00000110492.17"/>
</dbReference>
<dbReference type="Ensembl" id="ENST00000395565.5">
    <molecule id="P21741-1"/>
    <property type="protein sequence ID" value="ENSP00000378932.1"/>
    <property type="gene ID" value="ENSG00000110492.17"/>
</dbReference>
<dbReference type="Ensembl" id="ENST00000395566.9">
    <molecule id="P21741-1"/>
    <property type="protein sequence ID" value="ENSP00000378933.4"/>
    <property type="gene ID" value="ENSG00000110492.17"/>
</dbReference>
<dbReference type="Ensembl" id="ENST00000395569.8">
    <molecule id="P21741-2"/>
    <property type="protein sequence ID" value="ENSP00000378936.4"/>
    <property type="gene ID" value="ENSG00000110492.17"/>
</dbReference>
<dbReference type="Ensembl" id="ENST00000405308.6">
    <molecule id="P21741-1"/>
    <property type="protein sequence ID" value="ENSP00000385451.2"/>
    <property type="gene ID" value="ENSG00000110492.17"/>
</dbReference>
<dbReference type="Ensembl" id="ENST00000407067.1">
    <molecule id="P21741-1"/>
    <property type="protein sequence ID" value="ENSP00000384034.1"/>
    <property type="gene ID" value="ENSG00000110492.17"/>
</dbReference>
<dbReference type="GeneID" id="4192"/>
<dbReference type="KEGG" id="hsa:4192"/>
<dbReference type="MANE-Select" id="ENST00000395566.9">
    <property type="protein sequence ID" value="ENSP00000378933.4"/>
    <property type="RefSeq nucleotide sequence ID" value="NM_002391.6"/>
    <property type="RefSeq protein sequence ID" value="NP_002382.1"/>
</dbReference>
<dbReference type="UCSC" id="uc001nco.5">
    <molecule id="P21741-1"/>
    <property type="organism name" value="human"/>
</dbReference>
<dbReference type="AGR" id="HGNC:6972"/>
<dbReference type="CTD" id="4192"/>
<dbReference type="DisGeNET" id="4192"/>
<dbReference type="GeneCards" id="MDK"/>
<dbReference type="HGNC" id="HGNC:6972">
    <property type="gene designation" value="MDK"/>
</dbReference>
<dbReference type="HPA" id="ENSG00000110492">
    <property type="expression patterns" value="Tissue enhanced (ovary)"/>
</dbReference>
<dbReference type="MIM" id="162096">
    <property type="type" value="gene"/>
</dbReference>
<dbReference type="neXtProt" id="NX_P21741"/>
<dbReference type="OpenTargets" id="ENSG00000110492"/>
<dbReference type="PharmGKB" id="PA30717"/>
<dbReference type="VEuPathDB" id="HostDB:ENSG00000110492"/>
<dbReference type="eggNOG" id="ENOG502S022">
    <property type="taxonomic scope" value="Eukaryota"/>
</dbReference>
<dbReference type="GeneTree" id="ENSGT00390000007640"/>
<dbReference type="HOGENOM" id="CLU_136864_0_0_1"/>
<dbReference type="InParanoid" id="P21741"/>
<dbReference type="OMA" id="AECQTTV"/>
<dbReference type="OrthoDB" id="8818336at2759"/>
<dbReference type="PAN-GO" id="P21741">
    <property type="GO annotations" value="1 GO annotation based on evolutionary models"/>
</dbReference>
<dbReference type="PhylomeDB" id="P21741"/>
<dbReference type="TreeFam" id="TF332376"/>
<dbReference type="PathwayCommons" id="P21741"/>
<dbReference type="Reactome" id="R-HSA-201556">
    <property type="pathway name" value="Signaling by ALK"/>
</dbReference>
<dbReference type="Reactome" id="R-HSA-2979096">
    <property type="pathway name" value="NOTCH2 Activation and Transmission of Signal to the Nucleus"/>
</dbReference>
<dbReference type="Reactome" id="R-HSA-9851151">
    <property type="pathway name" value="MDK and PTN in ALK signaling"/>
</dbReference>
<dbReference type="SignaLink" id="P21741"/>
<dbReference type="SIGNOR" id="P21741"/>
<dbReference type="BioGRID-ORCS" id="4192">
    <property type="hits" value="21 hits in 1169 CRISPR screens"/>
</dbReference>
<dbReference type="ChiTaRS" id="MDK">
    <property type="organism name" value="human"/>
</dbReference>
<dbReference type="EvolutionaryTrace" id="P21741"/>
<dbReference type="GeneWiki" id="Midkine"/>
<dbReference type="GenomeRNAi" id="4192"/>
<dbReference type="Pharos" id="P21741">
    <property type="development level" value="Tchem"/>
</dbReference>
<dbReference type="PRO" id="PR:P21741"/>
<dbReference type="Proteomes" id="UP000005640">
    <property type="component" value="Chromosome 11"/>
</dbReference>
<dbReference type="RNAct" id="P21741">
    <property type="molecule type" value="protein"/>
</dbReference>
<dbReference type="Bgee" id="ENSG00000110492">
    <property type="expression patterns" value="Expressed in ventricular zone and 100 other cell types or tissues"/>
</dbReference>
<dbReference type="ExpressionAtlas" id="P21741">
    <property type="expression patterns" value="baseline and differential"/>
</dbReference>
<dbReference type="GO" id="GO:0042995">
    <property type="term" value="C:cell projection"/>
    <property type="evidence" value="ECO:0007669"/>
    <property type="project" value="Ensembl"/>
</dbReference>
<dbReference type="GO" id="GO:0005576">
    <property type="term" value="C:extracellular region"/>
    <property type="evidence" value="ECO:0000304"/>
    <property type="project" value="Reactome"/>
</dbReference>
<dbReference type="GO" id="GO:0035374">
    <property type="term" value="F:chondroitin sulfate binding"/>
    <property type="evidence" value="ECO:0000250"/>
    <property type="project" value="UniProtKB"/>
</dbReference>
<dbReference type="GO" id="GO:0008083">
    <property type="term" value="F:growth factor activity"/>
    <property type="evidence" value="ECO:0000318"/>
    <property type="project" value="GO_Central"/>
</dbReference>
<dbReference type="GO" id="GO:1904399">
    <property type="term" value="F:heparan sulfate binding"/>
    <property type="evidence" value="ECO:0000314"/>
    <property type="project" value="UniProtKB"/>
</dbReference>
<dbReference type="GO" id="GO:0008201">
    <property type="term" value="F:heparin binding"/>
    <property type="evidence" value="ECO:0000314"/>
    <property type="project" value="UniProtKB"/>
</dbReference>
<dbReference type="GO" id="GO:0030325">
    <property type="term" value="P:adrenal gland development"/>
    <property type="evidence" value="ECO:0000250"/>
    <property type="project" value="UniProtKB"/>
</dbReference>
<dbReference type="GO" id="GO:0001662">
    <property type="term" value="P:behavioral fear response"/>
    <property type="evidence" value="ECO:0007669"/>
    <property type="project" value="Ensembl"/>
</dbReference>
<dbReference type="GO" id="GO:0030154">
    <property type="term" value="P:cell differentiation"/>
    <property type="evidence" value="ECO:0000303"/>
    <property type="project" value="UniProtKB"/>
</dbReference>
<dbReference type="GO" id="GO:0021681">
    <property type="term" value="P:cerebellar granular layer development"/>
    <property type="evidence" value="ECO:0007669"/>
    <property type="project" value="Ensembl"/>
</dbReference>
<dbReference type="GO" id="GO:0021987">
    <property type="term" value="P:cerebral cortex development"/>
    <property type="evidence" value="ECO:0007669"/>
    <property type="project" value="Ensembl"/>
</dbReference>
<dbReference type="GO" id="GO:0007010">
    <property type="term" value="P:cytoskeleton organization"/>
    <property type="evidence" value="ECO:0000250"/>
    <property type="project" value="UniProtKB"/>
</dbReference>
<dbReference type="GO" id="GO:0030421">
    <property type="term" value="P:defecation"/>
    <property type="evidence" value="ECO:0007669"/>
    <property type="project" value="Ensembl"/>
</dbReference>
<dbReference type="GO" id="GO:0021542">
    <property type="term" value="P:dentate gyrus development"/>
    <property type="evidence" value="ECO:0007669"/>
    <property type="project" value="Ensembl"/>
</dbReference>
<dbReference type="GO" id="GO:0044849">
    <property type="term" value="P:estrous cycle"/>
    <property type="evidence" value="ECO:0000250"/>
    <property type="project" value="UniProtKB"/>
</dbReference>
<dbReference type="GO" id="GO:0106091">
    <property type="term" value="P:glial cell projection elongation"/>
    <property type="evidence" value="ECO:0000250"/>
    <property type="project" value="UniProtKB"/>
</dbReference>
<dbReference type="GO" id="GO:0035556">
    <property type="term" value="P:intracellular signal transduction"/>
    <property type="evidence" value="ECO:0000314"/>
    <property type="project" value="UniProtKB"/>
</dbReference>
<dbReference type="GO" id="GO:0002232">
    <property type="term" value="P:leukocyte chemotaxis involved in inflammatory response"/>
    <property type="evidence" value="ECO:0000315"/>
    <property type="project" value="UniProtKB"/>
</dbReference>
<dbReference type="GO" id="GO:0090090">
    <property type="term" value="P:negative regulation of canonical Wnt signaling pathway"/>
    <property type="evidence" value="ECO:0000250"/>
    <property type="project" value="UniProtKB"/>
</dbReference>
<dbReference type="GO" id="GO:0010667">
    <property type="term" value="P:negative regulation of cardiac muscle cell apoptotic process"/>
    <property type="evidence" value="ECO:0000315"/>
    <property type="project" value="UniProtKB"/>
</dbReference>
<dbReference type="GO" id="GO:0007162">
    <property type="term" value="P:negative regulation of cell adhesion"/>
    <property type="evidence" value="ECO:0000250"/>
    <property type="project" value="UniProtKB"/>
</dbReference>
<dbReference type="GO" id="GO:1904036">
    <property type="term" value="P:negative regulation of epithelial cell apoptotic process"/>
    <property type="evidence" value="ECO:0000250"/>
    <property type="project" value="UniProtKB"/>
</dbReference>
<dbReference type="GO" id="GO:0106015">
    <property type="term" value="P:negative regulation of inflammatory response to wounding"/>
    <property type="evidence" value="ECO:0000250"/>
    <property type="project" value="UniProtKB"/>
</dbReference>
<dbReference type="GO" id="GO:0043524">
    <property type="term" value="P:negative regulation of neuron apoptotic process"/>
    <property type="evidence" value="ECO:0000314"/>
    <property type="project" value="UniProtKB"/>
</dbReference>
<dbReference type="GO" id="GO:0030279">
    <property type="term" value="P:negative regulation of ossification"/>
    <property type="evidence" value="ECO:0000250"/>
    <property type="project" value="UniProtKB"/>
</dbReference>
<dbReference type="GO" id="GO:0045590">
    <property type="term" value="P:negative regulation of regulatory T cell differentiation"/>
    <property type="evidence" value="ECO:0000315"/>
    <property type="project" value="UniProtKB"/>
</dbReference>
<dbReference type="GO" id="GO:0007399">
    <property type="term" value="P:nervous system development"/>
    <property type="evidence" value="ECO:0000303"/>
    <property type="project" value="UniProtKB"/>
</dbReference>
<dbReference type="GO" id="GO:0048477">
    <property type="term" value="P:oogenesis"/>
    <property type="evidence" value="ECO:0000250"/>
    <property type="project" value="UniProtKB"/>
</dbReference>
<dbReference type="GO" id="GO:1905653">
    <property type="term" value="P:positive regulation of artery morphogenesis"/>
    <property type="evidence" value="ECO:0000250"/>
    <property type="project" value="UniProtKB"/>
</dbReference>
<dbReference type="GO" id="GO:1905555">
    <property type="term" value="P:positive regulation of blood vessel branching"/>
    <property type="evidence" value="ECO:0000315"/>
    <property type="project" value="UniProtKB"/>
</dbReference>
<dbReference type="GO" id="GO:0061036">
    <property type="term" value="P:positive regulation of cartilage development"/>
    <property type="evidence" value="ECO:0000250"/>
    <property type="project" value="UniProtKB"/>
</dbReference>
<dbReference type="GO" id="GO:0045785">
    <property type="term" value="P:positive regulation of cell adhesion"/>
    <property type="evidence" value="ECO:0000314"/>
    <property type="project" value="UniProtKB"/>
</dbReference>
<dbReference type="GO" id="GO:0051781">
    <property type="term" value="P:positive regulation of cell division"/>
    <property type="evidence" value="ECO:0007669"/>
    <property type="project" value="UniProtKB-KW"/>
</dbReference>
<dbReference type="GO" id="GO:0030335">
    <property type="term" value="P:positive regulation of cell migration"/>
    <property type="evidence" value="ECO:0000314"/>
    <property type="project" value="UniProtKB"/>
</dbReference>
<dbReference type="GO" id="GO:0045893">
    <property type="term" value="P:positive regulation of DNA-templated transcription"/>
    <property type="evidence" value="ECO:0007669"/>
    <property type="project" value="Ensembl"/>
</dbReference>
<dbReference type="GO" id="GO:0010718">
    <property type="term" value="P:positive regulation of epithelial to mesenchymal transition"/>
    <property type="evidence" value="ECO:0000315"/>
    <property type="project" value="UniProtKB"/>
</dbReference>
<dbReference type="GO" id="GO:2000347">
    <property type="term" value="P:positive regulation of hepatocyte proliferation"/>
    <property type="evidence" value="ECO:0000250"/>
    <property type="project" value="UniProtKB"/>
</dbReference>
<dbReference type="GO" id="GO:0050729">
    <property type="term" value="P:positive regulation of inflammatory response"/>
    <property type="evidence" value="ECO:0000315"/>
    <property type="project" value="UniProtKB"/>
</dbReference>
<dbReference type="GO" id="GO:0106016">
    <property type="term" value="P:positive regulation of inflammatory response to wounding"/>
    <property type="evidence" value="ECO:0000250"/>
    <property type="project" value="UniProtKB"/>
</dbReference>
<dbReference type="GO" id="GO:0032735">
    <property type="term" value="P:positive regulation of interleukin-12 production"/>
    <property type="evidence" value="ECO:0000315"/>
    <property type="project" value="UniProtKB"/>
</dbReference>
<dbReference type="GO" id="GO:0010838">
    <property type="term" value="P:positive regulation of keratinocyte proliferation"/>
    <property type="evidence" value="ECO:0000314"/>
    <property type="project" value="UniProtKB"/>
</dbReference>
<dbReference type="GO" id="GO:1904996">
    <property type="term" value="P:positive regulation of leukocyte adhesion to vascular endothelial cell"/>
    <property type="evidence" value="ECO:0000250"/>
    <property type="project" value="UniProtKB"/>
</dbReference>
<dbReference type="GO" id="GO:1903039">
    <property type="term" value="P:positive regulation of leukocyte cell-cell adhesion"/>
    <property type="evidence" value="ECO:0000315"/>
    <property type="project" value="UniProtKB"/>
</dbReference>
<dbReference type="GO" id="GO:0002690">
    <property type="term" value="P:positive regulation of leukocyte chemotaxis"/>
    <property type="evidence" value="ECO:0000250"/>
    <property type="project" value="UniProtKB"/>
</dbReference>
<dbReference type="GO" id="GO:0010759">
    <property type="term" value="P:positive regulation of macrophage chemotaxis"/>
    <property type="evidence" value="ECO:0000315"/>
    <property type="project" value="UniProtKB"/>
</dbReference>
<dbReference type="GO" id="GO:2000179">
    <property type="term" value="P:positive regulation of neural precursor cell proliferation"/>
    <property type="evidence" value="ECO:0000250"/>
    <property type="project" value="UniProtKB"/>
</dbReference>
<dbReference type="GO" id="GO:2001224">
    <property type="term" value="P:positive regulation of neuron migration"/>
    <property type="evidence" value="ECO:0000315"/>
    <property type="project" value="UniProtKB"/>
</dbReference>
<dbReference type="GO" id="GO:0010976">
    <property type="term" value="P:positive regulation of neuron projection development"/>
    <property type="evidence" value="ECO:0000314"/>
    <property type="project" value="UniProtKB"/>
</dbReference>
<dbReference type="GO" id="GO:0090023">
    <property type="term" value="P:positive regulation of neutrophil chemotaxis"/>
    <property type="evidence" value="ECO:0000250"/>
    <property type="project" value="UniProtKB"/>
</dbReference>
<dbReference type="GO" id="GO:2000391">
    <property type="term" value="P:positive regulation of neutrophil extravasation"/>
    <property type="evidence" value="ECO:0000250"/>
    <property type="project" value="UniProtKB"/>
</dbReference>
<dbReference type="GO" id="GO:0048714">
    <property type="term" value="P:positive regulation of oligodendrocyte differentiation"/>
    <property type="evidence" value="ECO:0000314"/>
    <property type="project" value="UniProtKB"/>
</dbReference>
<dbReference type="GO" id="GO:0071673">
    <property type="term" value="P:positive regulation of smooth muscle cell chemotaxis"/>
    <property type="evidence" value="ECO:0000315"/>
    <property type="project" value="UniProtKB"/>
</dbReference>
<dbReference type="GO" id="GO:1900026">
    <property type="term" value="P:positive regulation of substrate adhesion-dependent cell spreading"/>
    <property type="evidence" value="ECO:0000250"/>
    <property type="project" value="UniProtKB"/>
</dbReference>
<dbReference type="GO" id="GO:0045582">
    <property type="term" value="P:positive regulation of T cell differentiation"/>
    <property type="evidence" value="ECO:0000250"/>
    <property type="project" value="UniProtKB"/>
</dbReference>
<dbReference type="GO" id="GO:1905564">
    <property type="term" value="P:positive regulation of vascular endothelial cell proliferation"/>
    <property type="evidence" value="ECO:0000250"/>
    <property type="project" value="UniProtKB"/>
</dbReference>
<dbReference type="GO" id="GO:0050795">
    <property type="term" value="P:regulation of behavior"/>
    <property type="evidence" value="ECO:0007669"/>
    <property type="project" value="Ensembl"/>
</dbReference>
<dbReference type="GO" id="GO:0046850">
    <property type="term" value="P:regulation of bone remodeling"/>
    <property type="evidence" value="ECO:0000250"/>
    <property type="project" value="UniProtKB"/>
</dbReference>
<dbReference type="GO" id="GO:0032330">
    <property type="term" value="P:regulation of chondrocyte differentiation"/>
    <property type="evidence" value="ECO:0000250"/>
    <property type="project" value="UniProtKB"/>
</dbReference>
<dbReference type="GO" id="GO:0010996">
    <property type="term" value="P:response to auditory stimulus"/>
    <property type="evidence" value="ECO:0000250"/>
    <property type="project" value="UniProtKB"/>
</dbReference>
<dbReference type="GO" id="GO:0051384">
    <property type="term" value="P:response to glucocorticoid"/>
    <property type="evidence" value="ECO:0007669"/>
    <property type="project" value="Ensembl"/>
</dbReference>
<dbReference type="GO" id="GO:0009611">
    <property type="term" value="P:response to wounding"/>
    <property type="evidence" value="ECO:0000250"/>
    <property type="project" value="UniProtKB"/>
</dbReference>
<dbReference type="GO" id="GO:0009410">
    <property type="term" value="P:response to xenobiotic stimulus"/>
    <property type="evidence" value="ECO:0007669"/>
    <property type="project" value="Ensembl"/>
</dbReference>
<dbReference type="GO" id="GO:0007614">
    <property type="term" value="P:short-term memory"/>
    <property type="evidence" value="ECO:0007669"/>
    <property type="project" value="Ensembl"/>
</dbReference>
<dbReference type="GO" id="GO:0007165">
    <property type="term" value="P:signal transduction"/>
    <property type="evidence" value="ECO:0000303"/>
    <property type="project" value="ProtInc"/>
</dbReference>
<dbReference type="GO" id="GO:0002286">
    <property type="term" value="P:T cell activation involved in immune response"/>
    <property type="evidence" value="ECO:0000250"/>
    <property type="project" value="UniProtKB"/>
</dbReference>
<dbReference type="GO" id="GO:0042246">
    <property type="term" value="P:tissue regeneration"/>
    <property type="evidence" value="ECO:0000250"/>
    <property type="project" value="UniProtKB"/>
</dbReference>
<dbReference type="FunFam" id="2.20.60.10:FF:000002">
    <property type="entry name" value="Midkine a"/>
    <property type="match status" value="1"/>
</dbReference>
<dbReference type="FunFam" id="2.30.90.10:FF:000001">
    <property type="entry name" value="Pleiotrophin"/>
    <property type="match status" value="1"/>
</dbReference>
<dbReference type="Gene3D" id="2.30.90.10">
    <property type="entry name" value="Heparin-binding Growth Factor, Midkine, Chain A- C-terminal Domain"/>
    <property type="match status" value="1"/>
</dbReference>
<dbReference type="Gene3D" id="2.20.60.10">
    <property type="entry name" value="Pleiotrophin/Midkine, N-terminal domain"/>
    <property type="match status" value="1"/>
</dbReference>
<dbReference type="InterPro" id="IPR000762">
    <property type="entry name" value="Midkine_heparin-bd_GF"/>
</dbReference>
<dbReference type="InterPro" id="IPR020090">
    <property type="entry name" value="PTN/MK_C_dom"/>
</dbReference>
<dbReference type="InterPro" id="IPR038130">
    <property type="entry name" value="PTN/MK_C_dom_sf"/>
</dbReference>
<dbReference type="InterPro" id="IPR020091">
    <property type="entry name" value="PTN/MK_diS_sf"/>
</dbReference>
<dbReference type="InterPro" id="IPR020089">
    <property type="entry name" value="PTN/MK_N_dom"/>
</dbReference>
<dbReference type="InterPro" id="IPR037122">
    <property type="entry name" value="PTN/MK_N_dom_sf"/>
</dbReference>
<dbReference type="InterPro" id="IPR020092">
    <property type="entry name" value="PTN_MK_heparin-bd_GF_CS"/>
</dbReference>
<dbReference type="PANTHER" id="PTHR13850:SF2">
    <property type="entry name" value="MIDKINE"/>
    <property type="match status" value="1"/>
</dbReference>
<dbReference type="PANTHER" id="PTHR13850">
    <property type="entry name" value="PLEIOTROPHIN FAMILY MEMBER"/>
    <property type="match status" value="1"/>
</dbReference>
<dbReference type="Pfam" id="PF01091">
    <property type="entry name" value="PTN_MK_C"/>
    <property type="match status" value="1"/>
</dbReference>
<dbReference type="Pfam" id="PF05196">
    <property type="entry name" value="PTN_MK_N"/>
    <property type="match status" value="1"/>
</dbReference>
<dbReference type="PRINTS" id="PR00269">
    <property type="entry name" value="PTNMIDKINE"/>
</dbReference>
<dbReference type="SMART" id="SM00193">
    <property type="entry name" value="PTN"/>
    <property type="match status" value="1"/>
</dbReference>
<dbReference type="SUPFAM" id="SSF57288">
    <property type="entry name" value="Midkine"/>
    <property type="match status" value="2"/>
</dbReference>
<dbReference type="PROSITE" id="PS00619">
    <property type="entry name" value="PTN_MK_1"/>
    <property type="match status" value="1"/>
</dbReference>
<dbReference type="PROSITE" id="PS00620">
    <property type="entry name" value="PTN_MK_2"/>
    <property type="match status" value="1"/>
</dbReference>
<comment type="function">
    <text evidence="1 2 3 4 5 6 7 9 11 13 14 16 17">Secreted protein that functions as a cytokine and growth factor and mediates its signal through cell-surface proteoglycan and non-proteoglycan receptors (PubMed:10212223, PubMed:10772929, PubMed:12084985, PubMed:12122009, PubMed:12573468, PubMed:15466886, PubMed:18469519, PubMed:24458438). Binds cell-surface proteoglycan receptors via their chondroitin sulfate (CS) groups (PubMed:10212223, PubMed:12084985). Thereby regulates many processes like inflammatory response, cell proliferation, cell adhesion, cell growth, cell survival, tissue regeneration, cell differentiation and cell migration (PubMed:10212223, PubMed:10683378, PubMed:10772929, PubMed:12084985, PubMed:12122009, PubMed:12573468, PubMed:15466886, PubMed:22323540, PubMed:24458438). Participates in inflammatory processes by exerting two different activities. Firstly, mediates neutrophils and macrophages recruitment to the sites of inflammation both by direct action by cooperating namely with ITGB2 via LRP1 and by inducing chemokine expression (PubMed:10683378, PubMed:24458438). This inflammation can be accompanied by epithelial cell survival and smooth muscle cell migration after renal and vessel damage, respectively (PubMed:10683378). Secondly, suppresses the development of tolerogenic dendric cells thereby inhibiting the differentiation of regulatory T cells and also promote T cell expansion through NFAT signaling and Th1 cell differentiation (PubMed:22323540). Promotes tissue regeneration after injury or trauma. After heart damage negatively regulates the recruitment of inflammatory cells and mediates cell survival through activation of anti-apoptotic signaling pathways via MAPKs and AKT pathways through the activation of angiogenesis (By similarity). Also facilitates liver regeneration as well as bone repair by recruiting macrophage at trauma site and by promoting cartilage development by facilitating chondrocyte differentiation (By similarity). Plays a role in brain by promoting neural precursor cells survival and growth through interaction with heparan sulfate proteoglycans (By similarity). Binds PTPRZ1 and promotes neuronal migration and embryonic neurons survival (PubMed:10212223). Binds SDC3 or GPC2 and mediates neurite outgrowth and cell adhesion (PubMed:12084985, PubMed:1768439). Binds chondroitin sulfate E and heparin leading to inhibition of neuronal cell adhesion induced by binding with GPC2 (PubMed:12084985). Binds CSPG5 and promotes elongation of oligodendroglial precursor-like cells (By similarity). Also binds ITGA6:ITGB1 complex; this interaction mediates MDK-induced neurite outgrowth (PubMed:15466886, PubMed:1768439). Binds LRP1; promotes neuronal survival (PubMed:10772929). Binds ITGA4:ITGB1 complex; this interaction mediates MDK-induced osteoblast cells migration through PXN phosphorylation (PubMed:15466886). Binds anaplastic lymphoma kinase (ALK) which induces ALK activation and subsequent phosphorylation of the insulin receptor substrate (IRS1), followed by the activation of mitogen-activated protein kinase (MAPK) and PI3-kinase, and the induction of cell proliferation (PubMed:12122009). Promotes epithelial to mesenchymal transition through interaction with NOTCH2 (PubMed:18469519). During arteriogenesis, plays a role in vascular endothelial cell proliferation by inducing VEGFA expression and release which in turn induces nitric oxide synthase expression. Moreover activates vasodilation through nitric oxide synthase activation (By similarity). Negatively regulates bone formation in response to mechanical load by inhibiting Wnt/beta-catenin signaling in osteoblasts (By similarity). In addition plays a role in hippocampal development, working memory, auditory response, early fetal adrenal gland development and the female reproductive system (By similarity).</text>
</comment>
<comment type="subunit">
    <text evidence="1 3 5 6 7 8 9 11 14">Homodimer. Interacts with ALK (PubMed:12122009). Interacts with LRP1; promotes neuronal survival (PubMed:10772929). Interacts with LRP2 (PubMed:10772929). Interacts with NCAM1 (PubMed:10772929). Interacts (via C-terminal) with PTPRZ1 (via chondroitin sulfate chains); this interaction is inhibited by PTN; this interaction promotes neuronal migration (PubMed:10212223). Interacts with NCL; this interaction promotes NCL clustering and lateral movements of this complex into lipid rafts leading to MDK internalization (PubMed:12147681). Interacts with LRP6 and LRP8: this interaction is calcium dependent (PubMed:12573468). Interacts with ITGA4 (PubMed:15466886). Interacts with ITGA6 (PubMed:15466886). Interacts with ITGB1 (PubMed:15466886). Interacts with ITGA4:ITGB1 complex; this interaction mediates MDK-induced osteoblast cells migration through PXN phosphorylation (PubMed:15466886). Interacts with ITGA6:ITGB1 complex; this interaction mediates MDK-induced neurite outgrowth (PubMed:15466886). Interacts with NOTCH2; this interaction mediates a nuclear accumulation of NOTCH2 and therefore activation of NOTCH2 signaling leading to interaction between HES1 and STAT3 (PubMed:18469519). Interacts with GPC2 (via heparan sulfate chain); this interaction is inhibited by heparin followed by chondroitin sulfate E; this interaction induces GPC2 clustering through heparan sulfate chain; this interaction induces neuronal cell adhesion and neurite outgrowth (PubMed:12084985). Interacts with SDC3; this interaction induces SDC3 clustering; this interaction induces neuronal cell adhesion and neurite outgrowth (PubMed:12084985). Interacts with SDC1 (By similarity). Interacts with CSPG5; this interaction promotes elongation of oligodendroglial precursor-like cells (By similarity).</text>
</comment>
<comment type="interaction">
    <interactant intactId="EBI-722444">
        <id>P21741</id>
    </interactant>
    <interactant intactId="EBI-541426">
        <id>Q9BXS5</id>
        <label>AP1M1</label>
    </interactant>
    <organismsDiffer>false</organismsDiffer>
    <experiments>3</experiments>
</comment>
<comment type="interaction">
    <interactant intactId="EBI-722444">
        <id>P21741</id>
    </interactant>
    <interactant intactId="EBI-9834454">
        <id>P08631-2</id>
        <label>HCK</label>
    </interactant>
    <organismsDiffer>false</organismsDiffer>
    <experiments>3</experiments>
</comment>
<comment type="interaction">
    <interactant intactId="EBI-722444">
        <id>P21741</id>
    </interactant>
    <interactant intactId="EBI-12205593">
        <id>Q8TAC2</id>
        <label>JOSD2</label>
    </interactant>
    <organismsDiffer>false</organismsDiffer>
    <experiments>3</experiments>
</comment>
<comment type="interaction">
    <interactant intactId="EBI-722444">
        <id>P21741</id>
    </interactant>
    <interactant intactId="EBI-11988931">
        <id>Q96C03-3</id>
        <label>MIEF2</label>
    </interactant>
    <organismsDiffer>false</organismsDiffer>
    <experiments>3</experiments>
</comment>
<comment type="interaction">
    <interactant intactId="EBI-722444">
        <id>P21741</id>
    </interactant>
    <interactant intactId="EBI-725252">
        <id>Q9UMS0</id>
        <label>NFU1</label>
    </interactant>
    <organismsDiffer>false</organismsDiffer>
    <experiments>3</experiments>
</comment>
<comment type="interaction">
    <interactant intactId="EBI-722444">
        <id>P21741</id>
    </interactant>
    <interactant intactId="EBI-741171">
        <id>Q96AL5</id>
        <label>PBX3</label>
    </interactant>
    <organismsDiffer>false</organismsDiffer>
    <experiments>3</experiments>
</comment>
<comment type="interaction">
    <interactant intactId="EBI-722444">
        <id>P21741</id>
    </interactant>
    <interactant intactId="EBI-3232108">
        <id>Q8N0V3</id>
        <label>RBFA</label>
    </interactant>
    <organismsDiffer>false</organismsDiffer>
    <experiments>3</experiments>
</comment>
<comment type="interaction">
    <interactant intactId="EBI-722444">
        <id>P21741</id>
    </interactant>
    <interactant intactId="EBI-710310">
        <id>Q15560</id>
        <label>TCEA2</label>
    </interactant>
    <organismsDiffer>false</organismsDiffer>
    <experiments>3</experiments>
</comment>
<comment type="interaction">
    <interactant intactId="EBI-722444">
        <id>P21741</id>
    </interactant>
    <interactant intactId="EBI-11603430">
        <id>Q6PL24</id>
        <label>TMED8</label>
    </interactant>
    <organismsDiffer>false</organismsDiffer>
    <experiments>3</experiments>
</comment>
<comment type="interaction">
    <interactant intactId="EBI-722444">
        <id>P21741</id>
    </interactant>
    <interactant intactId="EBI-741480">
        <id>Q9UMX0</id>
        <label>UBQLN1</label>
    </interactant>
    <organismsDiffer>false</organismsDiffer>
    <experiments>3</experiments>
</comment>
<comment type="interaction">
    <interactant intactId="EBI-722444">
        <id>P21741</id>
    </interactant>
    <interactant intactId="EBI-947187">
        <id>Q9UHD9</id>
        <label>UBQLN2</label>
    </interactant>
    <organismsDiffer>false</organismsDiffer>
    <experiments>3</experiments>
</comment>
<comment type="subcellular location">
    <subcellularLocation>
        <location>Secreted</location>
    </subcellularLocation>
</comment>
<comment type="alternative products">
    <event type="alternative splicing"/>
    <isoform>
        <id>P21741-1</id>
        <name>1</name>
        <sequence type="displayed"/>
    </isoform>
    <isoform>
        <id>P21741-2</id>
        <name>2</name>
        <name>tMKA</name>
        <sequence type="described" ref="VSP_047452"/>
    </isoform>
</comment>
<comment type="tissue specificity">
    <text evidence="12">Expressed in various tumor cell lines. In insulinoma tissue predominantly expressed in precancerous lesions.</text>
</comment>
<comment type="induction">
    <text evidence="13 18">By heparin and retinoic acid.</text>
</comment>
<comment type="miscellaneous">
    <molecule>Isoform 2</molecule>
    <text evidence="23">Found in cancer tissues with expression in the tumor bodies and surrounding normal cells.</text>
</comment>
<comment type="similarity">
    <text evidence="23">Belongs to the pleiotrophin family.</text>
</comment>
<sequence length="143" mass="15585">MQHRGFLLLTLLALLALTSAVAKKKDKVKKGGPGSECAEWAWGPCTPSSKDCGVGFREGTCGAQTQRIRCRVPCNWKKEFGADCKYKFENWGACDGGTGTKVRQGTLKKARYNAQCQETIRVTKPCTPKTKAKAKAKKGKGKD</sequence>
<organism>
    <name type="scientific">Homo sapiens</name>
    <name type="common">Human</name>
    <dbReference type="NCBI Taxonomy" id="9606"/>
    <lineage>
        <taxon>Eukaryota</taxon>
        <taxon>Metazoa</taxon>
        <taxon>Chordata</taxon>
        <taxon>Craniata</taxon>
        <taxon>Vertebrata</taxon>
        <taxon>Euteleostomi</taxon>
        <taxon>Mammalia</taxon>
        <taxon>Eutheria</taxon>
        <taxon>Euarchontoglires</taxon>
        <taxon>Primates</taxon>
        <taxon>Haplorrhini</taxon>
        <taxon>Catarrhini</taxon>
        <taxon>Hominidae</taxon>
        <taxon>Homo</taxon>
    </lineage>
</organism>
<keyword id="KW-0002">3D-structure</keyword>
<keyword id="KW-0025">Alternative splicing</keyword>
<keyword id="KW-0217">Developmental protein</keyword>
<keyword id="KW-0221">Differentiation</keyword>
<keyword id="KW-0903">Direct protein sequencing</keyword>
<keyword id="KW-1015">Disulfide bond</keyword>
<keyword id="KW-0339">Growth factor</keyword>
<keyword id="KW-0358">Heparin-binding</keyword>
<keyword id="KW-0497">Mitogen</keyword>
<keyword id="KW-1267">Proteomics identification</keyword>
<keyword id="KW-1185">Reference proteome</keyword>
<keyword id="KW-0964">Secreted</keyword>
<keyword id="KW-0732">Signal</keyword>
<accession>P21741</accession>
<accession>Q2LEK4</accession>
<accession>Q9UCC7</accession>